<reference key="1">
    <citation type="journal article" date="2015" name="Proc. Natl. Acad. Sci. U.S.A.">
        <title>Trichodesmium genome maintains abundant, widespread noncoding DNA in situ, despite oligotrophic lifestyle.</title>
        <authorList>
            <person name="Walworth N."/>
            <person name="Pfreundt U."/>
            <person name="Nelson W.C."/>
            <person name="Mincer T."/>
            <person name="Heidelberg J.F."/>
            <person name="Fu F."/>
            <person name="Waterbury J.B."/>
            <person name="Glavina del Rio T."/>
            <person name="Goodwin L."/>
            <person name="Kyrpides N.C."/>
            <person name="Land M.L."/>
            <person name="Woyke T."/>
            <person name="Hutchins D.A."/>
            <person name="Hess W.R."/>
            <person name="Webb E.A."/>
        </authorList>
    </citation>
    <scope>NUCLEOTIDE SEQUENCE [LARGE SCALE GENOMIC DNA]</scope>
    <source>
        <strain>IMS101</strain>
    </source>
</reference>
<comment type="function">
    <text evidence="1">Involved in the synthesis of meso-diaminopimelate (m-DAP or DL-DAP), required for both lysine and peptidoglycan biosynthesis. Catalyzes the direct conversion of tetrahydrodipicolinate to LL-diaminopimelate.</text>
</comment>
<comment type="catalytic activity">
    <reaction evidence="1">
        <text>(2S,6S)-2,6-diaminopimelate + 2-oxoglutarate = (S)-2,3,4,5-tetrahydrodipicolinate + L-glutamate + H2O + H(+)</text>
        <dbReference type="Rhea" id="RHEA:23988"/>
        <dbReference type="ChEBI" id="CHEBI:15377"/>
        <dbReference type="ChEBI" id="CHEBI:15378"/>
        <dbReference type="ChEBI" id="CHEBI:16810"/>
        <dbReference type="ChEBI" id="CHEBI:16845"/>
        <dbReference type="ChEBI" id="CHEBI:29985"/>
        <dbReference type="ChEBI" id="CHEBI:57609"/>
        <dbReference type="EC" id="2.6.1.83"/>
    </reaction>
</comment>
<comment type="cofactor">
    <cofactor evidence="1">
        <name>pyridoxal 5'-phosphate</name>
        <dbReference type="ChEBI" id="CHEBI:597326"/>
    </cofactor>
</comment>
<comment type="pathway">
    <text evidence="1">Amino-acid biosynthesis; L-lysine biosynthesis via DAP pathway; LL-2,6-diaminopimelate from (S)-tetrahydrodipicolinate (aminotransferase route): step 1/1.</text>
</comment>
<comment type="subunit">
    <text evidence="1">Homodimer.</text>
</comment>
<comment type="similarity">
    <text evidence="1">Belongs to the class-I pyridoxal-phosphate-dependent aminotransferase family. LL-diaminopimelate aminotransferase subfamily.</text>
</comment>
<sequence length="411" mass="45065">MATINDNYLKLKAGYLFPEIARRVNTFAEAHPEAQIIKLGIGDVTEPLPKACIQAMTKAVAEMGDRSTFKGYGPEQGYAWLREKIAAQDFQGRGCDIDASEIFISDGSKCDSGNILDIIGNNNTIAVTDPVYPVYVDTNVMAGNTGAVNEKGEYEGLVYLPIRAENNFTAEIPTQKVDLIYLCFPNNPTGATATKEYLQTWVNYARANDAIILFDAAYEAFITDASLPHSIYEIEGAKECAIEFRSFSKNAGFTGTRCALTVVPKTLKGKAADGSDVELWKLWNRRQSTKFNGVSYIVQRGAEAVYSEEGKAQVKGLIQFYLENAKIICSQLQAAGLTVYGGVNAPYVWVQTPTGLSSWDFFDKLLQNCNVVGTPGSGFGAAGEGYFRISSFNSRENVNEAMKRITEKFKV</sequence>
<evidence type="ECO:0000255" key="1">
    <source>
        <dbReference type="HAMAP-Rule" id="MF_01642"/>
    </source>
</evidence>
<feature type="chain" id="PRO_0000312555" description="LL-diaminopimelate aminotransferase">
    <location>
        <begin position="1"/>
        <end position="411"/>
    </location>
</feature>
<feature type="binding site" evidence="1">
    <location>
        <position position="15"/>
    </location>
    <ligand>
        <name>substrate</name>
    </ligand>
</feature>
<feature type="binding site" evidence="1">
    <location>
        <position position="42"/>
    </location>
    <ligand>
        <name>substrate</name>
    </ligand>
</feature>
<feature type="binding site" evidence="1">
    <location>
        <position position="72"/>
    </location>
    <ligand>
        <name>pyridoxal 5'-phosphate</name>
        <dbReference type="ChEBI" id="CHEBI:597326"/>
    </ligand>
</feature>
<feature type="binding site" evidence="1">
    <location>
        <begin position="108"/>
        <end position="109"/>
    </location>
    <ligand>
        <name>pyridoxal 5'-phosphate</name>
        <dbReference type="ChEBI" id="CHEBI:597326"/>
    </ligand>
</feature>
<feature type="binding site" evidence="1">
    <location>
        <position position="109"/>
    </location>
    <ligand>
        <name>substrate</name>
    </ligand>
</feature>
<feature type="binding site" evidence="1">
    <location>
        <position position="132"/>
    </location>
    <ligand>
        <name>pyridoxal 5'-phosphate</name>
        <dbReference type="ChEBI" id="CHEBI:597326"/>
    </ligand>
</feature>
<feature type="binding site" evidence="1">
    <location>
        <position position="132"/>
    </location>
    <ligand>
        <name>substrate</name>
    </ligand>
</feature>
<feature type="binding site" evidence="1">
    <location>
        <position position="187"/>
    </location>
    <ligand>
        <name>pyridoxal 5'-phosphate</name>
        <dbReference type="ChEBI" id="CHEBI:597326"/>
    </ligand>
</feature>
<feature type="binding site" evidence="1">
    <location>
        <position position="187"/>
    </location>
    <ligand>
        <name>substrate</name>
    </ligand>
</feature>
<feature type="binding site" evidence="1">
    <location>
        <position position="218"/>
    </location>
    <ligand>
        <name>pyridoxal 5'-phosphate</name>
        <dbReference type="ChEBI" id="CHEBI:597326"/>
    </ligand>
</feature>
<feature type="binding site" evidence="1">
    <location>
        <begin position="246"/>
        <end position="248"/>
    </location>
    <ligand>
        <name>pyridoxal 5'-phosphate</name>
        <dbReference type="ChEBI" id="CHEBI:597326"/>
    </ligand>
</feature>
<feature type="binding site" evidence="1">
    <location>
        <position position="257"/>
    </location>
    <ligand>
        <name>pyridoxal 5'-phosphate</name>
        <dbReference type="ChEBI" id="CHEBI:597326"/>
    </ligand>
</feature>
<feature type="binding site" evidence="1">
    <location>
        <position position="292"/>
    </location>
    <ligand>
        <name>pyridoxal 5'-phosphate</name>
        <dbReference type="ChEBI" id="CHEBI:597326"/>
    </ligand>
</feature>
<feature type="binding site" evidence="1">
    <location>
        <position position="292"/>
    </location>
    <ligand>
        <name>substrate</name>
    </ligand>
</feature>
<feature type="binding site" evidence="1">
    <location>
        <position position="388"/>
    </location>
    <ligand>
        <name>substrate</name>
    </ligand>
</feature>
<feature type="modified residue" description="N6-(pyridoxal phosphate)lysine" evidence="1">
    <location>
        <position position="249"/>
    </location>
</feature>
<name>DAPAT_TRIEI</name>
<protein>
    <recommendedName>
        <fullName evidence="1">LL-diaminopimelate aminotransferase</fullName>
        <shortName evidence="1">DAP-AT</shortName>
        <shortName evidence="1">DAP-aminotransferase</shortName>
        <shortName evidence="1">LL-DAP-aminotransferase</shortName>
        <ecNumber evidence="1">2.6.1.83</ecNumber>
    </recommendedName>
</protein>
<organism>
    <name type="scientific">Trichodesmium erythraeum (strain IMS101)</name>
    <dbReference type="NCBI Taxonomy" id="203124"/>
    <lineage>
        <taxon>Bacteria</taxon>
        <taxon>Bacillati</taxon>
        <taxon>Cyanobacteriota</taxon>
        <taxon>Cyanophyceae</taxon>
        <taxon>Oscillatoriophycideae</taxon>
        <taxon>Oscillatoriales</taxon>
        <taxon>Microcoleaceae</taxon>
        <taxon>Trichodesmium</taxon>
    </lineage>
</organism>
<keyword id="KW-0032">Aminotransferase</keyword>
<keyword id="KW-0663">Pyridoxal phosphate</keyword>
<keyword id="KW-0808">Transferase</keyword>
<gene>
    <name evidence="1" type="primary">dapL</name>
    <name type="ordered locus">Tery_3293</name>
</gene>
<accession>Q10ZC3</accession>
<dbReference type="EC" id="2.6.1.83" evidence="1"/>
<dbReference type="EMBL" id="CP000393">
    <property type="protein sequence ID" value="ABG52401.1"/>
    <property type="molecule type" value="Genomic_DNA"/>
</dbReference>
<dbReference type="RefSeq" id="WP_011612746.1">
    <property type="nucleotide sequence ID" value="NC_008312.1"/>
</dbReference>
<dbReference type="SMR" id="Q10ZC3"/>
<dbReference type="STRING" id="203124.Tery_3293"/>
<dbReference type="KEGG" id="ter:Tery_3293"/>
<dbReference type="eggNOG" id="COG0436">
    <property type="taxonomic scope" value="Bacteria"/>
</dbReference>
<dbReference type="HOGENOM" id="CLU_051433_0_0_3"/>
<dbReference type="OrthoDB" id="9802328at2"/>
<dbReference type="UniPathway" id="UPA00034">
    <property type="reaction ID" value="UER00466"/>
</dbReference>
<dbReference type="GO" id="GO:0010285">
    <property type="term" value="F:L,L-diaminopimelate aminotransferase activity"/>
    <property type="evidence" value="ECO:0007669"/>
    <property type="project" value="UniProtKB-UniRule"/>
</dbReference>
<dbReference type="GO" id="GO:0030170">
    <property type="term" value="F:pyridoxal phosphate binding"/>
    <property type="evidence" value="ECO:0007669"/>
    <property type="project" value="UniProtKB-UniRule"/>
</dbReference>
<dbReference type="GO" id="GO:0033362">
    <property type="term" value="P:lysine biosynthetic process via diaminopimelate, diaminopimelate-aminotransferase pathway"/>
    <property type="evidence" value="ECO:0007669"/>
    <property type="project" value="UniProtKB-UniRule"/>
</dbReference>
<dbReference type="CDD" id="cd00609">
    <property type="entry name" value="AAT_like"/>
    <property type="match status" value="1"/>
</dbReference>
<dbReference type="FunFam" id="3.40.640.10:FF:000099">
    <property type="entry name" value="LL-diaminopimelate aminotransferase, chloroplastic"/>
    <property type="match status" value="1"/>
</dbReference>
<dbReference type="Gene3D" id="3.90.1150.10">
    <property type="entry name" value="Aspartate Aminotransferase, domain 1"/>
    <property type="match status" value="1"/>
</dbReference>
<dbReference type="Gene3D" id="3.40.640.10">
    <property type="entry name" value="Type I PLP-dependent aspartate aminotransferase-like (Major domain)"/>
    <property type="match status" value="1"/>
</dbReference>
<dbReference type="HAMAP" id="MF_01642">
    <property type="entry name" value="DapL_aminotrans_1"/>
    <property type="match status" value="1"/>
</dbReference>
<dbReference type="InterPro" id="IPR004839">
    <property type="entry name" value="Aminotransferase_I/II_large"/>
</dbReference>
<dbReference type="InterPro" id="IPR019942">
    <property type="entry name" value="DapL/ALD1"/>
</dbReference>
<dbReference type="InterPro" id="IPR015424">
    <property type="entry name" value="PyrdxlP-dep_Trfase"/>
</dbReference>
<dbReference type="InterPro" id="IPR015421">
    <property type="entry name" value="PyrdxlP-dep_Trfase_major"/>
</dbReference>
<dbReference type="InterPro" id="IPR015422">
    <property type="entry name" value="PyrdxlP-dep_Trfase_small"/>
</dbReference>
<dbReference type="NCBIfam" id="TIGR03542">
    <property type="entry name" value="DAPAT_plant"/>
    <property type="match status" value="1"/>
</dbReference>
<dbReference type="PANTHER" id="PTHR43144">
    <property type="entry name" value="AMINOTRANSFERASE"/>
    <property type="match status" value="1"/>
</dbReference>
<dbReference type="Pfam" id="PF00155">
    <property type="entry name" value="Aminotran_1_2"/>
    <property type="match status" value="1"/>
</dbReference>
<dbReference type="SUPFAM" id="SSF53383">
    <property type="entry name" value="PLP-dependent transferases"/>
    <property type="match status" value="1"/>
</dbReference>
<proteinExistence type="inferred from homology"/>